<keyword id="KW-0963">Cytoplasm</keyword>
<keyword id="KW-0456">Lyase</keyword>
<keyword id="KW-0704">Schiff base</keyword>
<dbReference type="EC" id="4.1.2.4" evidence="1"/>
<dbReference type="EMBL" id="CU928158">
    <property type="protein sequence ID" value="CAQ91891.1"/>
    <property type="molecule type" value="Genomic_DNA"/>
</dbReference>
<dbReference type="RefSeq" id="WP_001295412.1">
    <property type="nucleotide sequence ID" value="NC_011740.1"/>
</dbReference>
<dbReference type="SMR" id="B7LNS1"/>
<dbReference type="GeneID" id="93777463"/>
<dbReference type="KEGG" id="efe:EFER_4478"/>
<dbReference type="HOGENOM" id="CLU_053595_3_1_6"/>
<dbReference type="OrthoDB" id="6579831at2"/>
<dbReference type="UniPathway" id="UPA00002">
    <property type="reaction ID" value="UER00468"/>
</dbReference>
<dbReference type="Proteomes" id="UP000000745">
    <property type="component" value="Chromosome"/>
</dbReference>
<dbReference type="GO" id="GO:0005737">
    <property type="term" value="C:cytoplasm"/>
    <property type="evidence" value="ECO:0007669"/>
    <property type="project" value="UniProtKB-SubCell"/>
</dbReference>
<dbReference type="GO" id="GO:0004139">
    <property type="term" value="F:deoxyribose-phosphate aldolase activity"/>
    <property type="evidence" value="ECO:0007669"/>
    <property type="project" value="UniProtKB-UniRule"/>
</dbReference>
<dbReference type="GO" id="GO:0006018">
    <property type="term" value="P:2-deoxyribose 1-phosphate catabolic process"/>
    <property type="evidence" value="ECO:0007669"/>
    <property type="project" value="UniProtKB-UniRule"/>
</dbReference>
<dbReference type="GO" id="GO:0016052">
    <property type="term" value="P:carbohydrate catabolic process"/>
    <property type="evidence" value="ECO:0007669"/>
    <property type="project" value="TreeGrafter"/>
</dbReference>
<dbReference type="GO" id="GO:0009264">
    <property type="term" value="P:deoxyribonucleotide catabolic process"/>
    <property type="evidence" value="ECO:0007669"/>
    <property type="project" value="InterPro"/>
</dbReference>
<dbReference type="CDD" id="cd00959">
    <property type="entry name" value="DeoC"/>
    <property type="match status" value="1"/>
</dbReference>
<dbReference type="FunFam" id="3.20.20.70:FF:000034">
    <property type="entry name" value="Deoxyribose-phosphate aldolase"/>
    <property type="match status" value="1"/>
</dbReference>
<dbReference type="Gene3D" id="3.20.20.70">
    <property type="entry name" value="Aldolase class I"/>
    <property type="match status" value="1"/>
</dbReference>
<dbReference type="HAMAP" id="MF_00592">
    <property type="entry name" value="DeoC_type2"/>
    <property type="match status" value="1"/>
</dbReference>
<dbReference type="InterPro" id="IPR013785">
    <property type="entry name" value="Aldolase_TIM"/>
</dbReference>
<dbReference type="InterPro" id="IPR011343">
    <property type="entry name" value="DeoC"/>
</dbReference>
<dbReference type="InterPro" id="IPR002915">
    <property type="entry name" value="DeoC/FbaB/LacD_aldolase"/>
</dbReference>
<dbReference type="InterPro" id="IPR023649">
    <property type="entry name" value="DeoC_typeII"/>
</dbReference>
<dbReference type="NCBIfam" id="TIGR00126">
    <property type="entry name" value="deoC"/>
    <property type="match status" value="1"/>
</dbReference>
<dbReference type="PANTHER" id="PTHR10889">
    <property type="entry name" value="DEOXYRIBOSE-PHOSPHATE ALDOLASE"/>
    <property type="match status" value="1"/>
</dbReference>
<dbReference type="PANTHER" id="PTHR10889:SF3">
    <property type="entry name" value="DEOXYRIBOSE-PHOSPHATE ALDOLASE"/>
    <property type="match status" value="1"/>
</dbReference>
<dbReference type="Pfam" id="PF01791">
    <property type="entry name" value="DeoC"/>
    <property type="match status" value="1"/>
</dbReference>
<dbReference type="PIRSF" id="PIRSF001357">
    <property type="entry name" value="DeoC"/>
    <property type="match status" value="1"/>
</dbReference>
<dbReference type="SMART" id="SM01133">
    <property type="entry name" value="DeoC"/>
    <property type="match status" value="1"/>
</dbReference>
<dbReference type="SUPFAM" id="SSF51569">
    <property type="entry name" value="Aldolase"/>
    <property type="match status" value="1"/>
</dbReference>
<organism>
    <name type="scientific">Escherichia fergusonii (strain ATCC 35469 / DSM 13698 / CCUG 18766 / IAM 14443 / JCM 21226 / LMG 7866 / NBRC 102419 / NCTC 12128 / CDC 0568-73)</name>
    <dbReference type="NCBI Taxonomy" id="585054"/>
    <lineage>
        <taxon>Bacteria</taxon>
        <taxon>Pseudomonadati</taxon>
        <taxon>Pseudomonadota</taxon>
        <taxon>Gammaproteobacteria</taxon>
        <taxon>Enterobacterales</taxon>
        <taxon>Enterobacteriaceae</taxon>
        <taxon>Escherichia</taxon>
    </lineage>
</organism>
<sequence length="259" mass="27748">MTDLKASSLRALKLMDLTTLNDDDTDEKVIALCHQAKTPVGNTAAICIYPRFIPIARKTLKEQGTPEIRIATVTNFPHGNDDIEIALAETRAAIAYGADEVDVVFPYRALMAGNEQVGFDLVKACKEACAAANVLLKVIIETGELKDEALIRKASEISIKAGADFIKTSTGKVAVNATPESARIMMEVIRDMGVEKTVGFKPAGGVRTAEDAQKYLAIADELFGADWADARHYRFGASSLLASLLKALGHGDGKSASSY</sequence>
<protein>
    <recommendedName>
        <fullName evidence="1">Deoxyribose-phosphate aldolase</fullName>
        <shortName evidence="1">DERA</shortName>
        <ecNumber evidence="1">4.1.2.4</ecNumber>
    </recommendedName>
    <alternativeName>
        <fullName evidence="1">2-deoxy-D-ribose 5-phosphate aldolase</fullName>
    </alternativeName>
    <alternativeName>
        <fullName evidence="1">Phosphodeoxyriboaldolase</fullName>
        <shortName evidence="1">Deoxyriboaldolase</shortName>
    </alternativeName>
</protein>
<name>DEOC_ESCF3</name>
<proteinExistence type="inferred from homology"/>
<evidence type="ECO:0000255" key="1">
    <source>
        <dbReference type="HAMAP-Rule" id="MF_00592"/>
    </source>
</evidence>
<reference key="1">
    <citation type="journal article" date="2009" name="PLoS Genet.">
        <title>Organised genome dynamics in the Escherichia coli species results in highly diverse adaptive paths.</title>
        <authorList>
            <person name="Touchon M."/>
            <person name="Hoede C."/>
            <person name="Tenaillon O."/>
            <person name="Barbe V."/>
            <person name="Baeriswyl S."/>
            <person name="Bidet P."/>
            <person name="Bingen E."/>
            <person name="Bonacorsi S."/>
            <person name="Bouchier C."/>
            <person name="Bouvet O."/>
            <person name="Calteau A."/>
            <person name="Chiapello H."/>
            <person name="Clermont O."/>
            <person name="Cruveiller S."/>
            <person name="Danchin A."/>
            <person name="Diard M."/>
            <person name="Dossat C."/>
            <person name="Karoui M.E."/>
            <person name="Frapy E."/>
            <person name="Garry L."/>
            <person name="Ghigo J.M."/>
            <person name="Gilles A.M."/>
            <person name="Johnson J."/>
            <person name="Le Bouguenec C."/>
            <person name="Lescat M."/>
            <person name="Mangenot S."/>
            <person name="Martinez-Jehanne V."/>
            <person name="Matic I."/>
            <person name="Nassif X."/>
            <person name="Oztas S."/>
            <person name="Petit M.A."/>
            <person name="Pichon C."/>
            <person name="Rouy Z."/>
            <person name="Ruf C.S."/>
            <person name="Schneider D."/>
            <person name="Tourret J."/>
            <person name="Vacherie B."/>
            <person name="Vallenet D."/>
            <person name="Medigue C."/>
            <person name="Rocha E.P.C."/>
            <person name="Denamur E."/>
        </authorList>
    </citation>
    <scope>NUCLEOTIDE SEQUENCE [LARGE SCALE GENOMIC DNA]</scope>
    <source>
        <strain>ATCC 35469 / DSM 13698 / BCRC 15582 / CCUG 18766 / IAM 14443 / JCM 21226 / LMG 7866 / NBRC 102419 / NCTC 12128 / CDC 0568-73</strain>
    </source>
</reference>
<feature type="chain" id="PRO_1000129808" description="Deoxyribose-phosphate aldolase">
    <location>
        <begin position="1"/>
        <end position="259"/>
    </location>
</feature>
<feature type="active site" description="Proton donor/acceptor" evidence="1">
    <location>
        <position position="102"/>
    </location>
</feature>
<feature type="active site" description="Schiff-base intermediate with acetaldehyde" evidence="1">
    <location>
        <position position="167"/>
    </location>
</feature>
<feature type="active site" description="Proton donor/acceptor" evidence="1">
    <location>
        <position position="201"/>
    </location>
</feature>
<comment type="function">
    <text evidence="1">Catalyzes a reversible aldol reaction between acetaldehyde and D-glyceraldehyde 3-phosphate to generate 2-deoxy-D-ribose 5-phosphate.</text>
</comment>
<comment type="catalytic activity">
    <reaction evidence="1">
        <text>2-deoxy-D-ribose 5-phosphate = D-glyceraldehyde 3-phosphate + acetaldehyde</text>
        <dbReference type="Rhea" id="RHEA:12821"/>
        <dbReference type="ChEBI" id="CHEBI:15343"/>
        <dbReference type="ChEBI" id="CHEBI:59776"/>
        <dbReference type="ChEBI" id="CHEBI:62877"/>
        <dbReference type="EC" id="4.1.2.4"/>
    </reaction>
</comment>
<comment type="pathway">
    <text evidence="1">Carbohydrate degradation; 2-deoxy-D-ribose 1-phosphate degradation; D-glyceraldehyde 3-phosphate and acetaldehyde from 2-deoxy-alpha-D-ribose 1-phosphate: step 2/2.</text>
</comment>
<comment type="subcellular location">
    <subcellularLocation>
        <location evidence="1">Cytoplasm</location>
    </subcellularLocation>
</comment>
<comment type="similarity">
    <text evidence="1">Belongs to the DeoC/FbaB aldolase family. DeoC type 2 subfamily.</text>
</comment>
<accession>B7LNS1</accession>
<gene>
    <name evidence="1" type="primary">deoC</name>
    <name type="ordered locus">EFER_4478</name>
</gene>